<keyword id="KW-0175">Coiled coil</keyword>
<keyword id="KW-0488">Methylation</keyword>
<keyword id="KW-0597">Phosphoprotein</keyword>
<keyword id="KW-1185">Reference proteome</keyword>
<feature type="chain" id="PRO_0000336053" description="RUN domain-containing protein 3B">
    <location>
        <begin position="1"/>
        <end position="403"/>
    </location>
</feature>
<feature type="domain" description="RUN" evidence="4">
    <location>
        <begin position="53"/>
        <end position="185"/>
    </location>
</feature>
<feature type="region of interest" description="Disordered" evidence="5">
    <location>
        <begin position="1"/>
        <end position="20"/>
    </location>
</feature>
<feature type="region of interest" description="Disordered" evidence="5">
    <location>
        <begin position="207"/>
        <end position="232"/>
    </location>
</feature>
<feature type="coiled-coil region" evidence="3">
    <location>
        <begin position="296"/>
        <end position="321"/>
    </location>
</feature>
<feature type="compositionally biased region" description="Polar residues" evidence="5">
    <location>
        <begin position="220"/>
        <end position="231"/>
    </location>
</feature>
<feature type="modified residue" description="Omega-N-methylarginine" evidence="2">
    <location>
        <position position="13"/>
    </location>
</feature>
<feature type="modified residue" description="Phosphoserine" evidence="7">
    <location>
        <position position="211"/>
    </location>
</feature>
<feature type="modified residue" description="Phosphoserine" evidence="7">
    <location>
        <position position="212"/>
    </location>
</feature>
<protein>
    <recommendedName>
        <fullName>RUN domain-containing protein 3B</fullName>
    </recommendedName>
</protein>
<gene>
    <name type="primary">Rundc3b</name>
</gene>
<dbReference type="EMBL" id="BC107563">
    <property type="protein sequence ID" value="AAI07564.1"/>
    <property type="molecule type" value="mRNA"/>
</dbReference>
<dbReference type="RefSeq" id="NP_001040581.1">
    <property type="nucleotide sequence ID" value="NM_001047116.2"/>
</dbReference>
<dbReference type="SMR" id="Q3B7K9"/>
<dbReference type="BioGRID" id="603416">
    <property type="interactions" value="2"/>
</dbReference>
<dbReference type="FunCoup" id="Q3B7K9">
    <property type="interactions" value="1942"/>
</dbReference>
<dbReference type="IntAct" id="Q3B7K9">
    <property type="interactions" value="1"/>
</dbReference>
<dbReference type="MINT" id="Q3B7K9"/>
<dbReference type="STRING" id="10116.ENSRNOP00000069461"/>
<dbReference type="iPTMnet" id="Q3B7K9"/>
<dbReference type="PhosphoSitePlus" id="Q3B7K9"/>
<dbReference type="PaxDb" id="10116-ENSRNOP00000035622"/>
<dbReference type="Ensembl" id="ENSRNOT00000030224.6">
    <property type="protein sequence ID" value="ENSRNOP00000035622.4"/>
    <property type="gene ID" value="ENSRNOG00000008463.8"/>
</dbReference>
<dbReference type="GeneID" id="688590"/>
<dbReference type="KEGG" id="rno:688590"/>
<dbReference type="AGR" id="RGD:1587590"/>
<dbReference type="CTD" id="154661"/>
<dbReference type="RGD" id="1587590">
    <property type="gene designation" value="Rundc3b"/>
</dbReference>
<dbReference type="eggNOG" id="KOG4381">
    <property type="taxonomic scope" value="Eukaryota"/>
</dbReference>
<dbReference type="GeneTree" id="ENSGT00940000159175"/>
<dbReference type="HOGENOM" id="CLU_045987_0_0_1"/>
<dbReference type="InParanoid" id="Q3B7K9"/>
<dbReference type="OrthoDB" id="10029904at2759"/>
<dbReference type="PhylomeDB" id="Q3B7K9"/>
<dbReference type="TreeFam" id="TF323904"/>
<dbReference type="PRO" id="PR:Q3B7K9"/>
<dbReference type="Proteomes" id="UP000002494">
    <property type="component" value="Chromosome 4"/>
</dbReference>
<dbReference type="Bgee" id="ENSRNOG00000008463">
    <property type="expression patterns" value="Expressed in cerebellum and 11 other cell types or tissues"/>
</dbReference>
<dbReference type="ExpressionAtlas" id="Q3B7K9">
    <property type="expression patterns" value="baseline and differential"/>
</dbReference>
<dbReference type="CDD" id="cd17700">
    <property type="entry name" value="RUN_RUNDC3B"/>
    <property type="match status" value="1"/>
</dbReference>
<dbReference type="Gene3D" id="1.20.58.900">
    <property type="match status" value="1"/>
</dbReference>
<dbReference type="InterPro" id="IPR004012">
    <property type="entry name" value="Run_dom"/>
</dbReference>
<dbReference type="InterPro" id="IPR037213">
    <property type="entry name" value="Run_dom_sf"/>
</dbReference>
<dbReference type="InterPro" id="IPR047339">
    <property type="entry name" value="RUN_RUNDC3B"/>
</dbReference>
<dbReference type="InterPro" id="IPR047340">
    <property type="entry name" value="RUNDC3A_B"/>
</dbReference>
<dbReference type="PANTHER" id="PTHR46251">
    <property type="entry name" value="RUN DOMAIN-CONTAINING 3 PROTEIN RUNDC3"/>
    <property type="match status" value="1"/>
</dbReference>
<dbReference type="PANTHER" id="PTHR46251:SF1">
    <property type="entry name" value="RUN DOMAIN-CONTAINING PROTEIN 3B"/>
    <property type="match status" value="1"/>
</dbReference>
<dbReference type="Pfam" id="PF02759">
    <property type="entry name" value="RUN"/>
    <property type="match status" value="1"/>
</dbReference>
<dbReference type="SMART" id="SM00593">
    <property type="entry name" value="RUN"/>
    <property type="match status" value="1"/>
</dbReference>
<dbReference type="SUPFAM" id="SSF140741">
    <property type="entry name" value="RUN domain-like"/>
    <property type="match status" value="1"/>
</dbReference>
<dbReference type="PROSITE" id="PS50826">
    <property type="entry name" value="RUN"/>
    <property type="match status" value="1"/>
</dbReference>
<organism>
    <name type="scientific">Rattus norvegicus</name>
    <name type="common">Rat</name>
    <dbReference type="NCBI Taxonomy" id="10116"/>
    <lineage>
        <taxon>Eukaryota</taxon>
        <taxon>Metazoa</taxon>
        <taxon>Chordata</taxon>
        <taxon>Craniata</taxon>
        <taxon>Vertebrata</taxon>
        <taxon>Euteleostomi</taxon>
        <taxon>Mammalia</taxon>
        <taxon>Eutheria</taxon>
        <taxon>Euarchontoglires</taxon>
        <taxon>Glires</taxon>
        <taxon>Rodentia</taxon>
        <taxon>Myomorpha</taxon>
        <taxon>Muroidea</taxon>
        <taxon>Muridae</taxon>
        <taxon>Murinae</taxon>
        <taxon>Rattus</taxon>
    </lineage>
</organism>
<proteinExistence type="evidence at protein level"/>
<evidence type="ECO:0000250" key="1"/>
<evidence type="ECO:0000250" key="2">
    <source>
        <dbReference type="UniProtKB" id="Q6PDC0"/>
    </source>
</evidence>
<evidence type="ECO:0000255" key="3"/>
<evidence type="ECO:0000255" key="4">
    <source>
        <dbReference type="PROSITE-ProRule" id="PRU00178"/>
    </source>
</evidence>
<evidence type="ECO:0000256" key="5">
    <source>
        <dbReference type="SAM" id="MobiDB-lite"/>
    </source>
</evidence>
<evidence type="ECO:0000305" key="6"/>
<evidence type="ECO:0007744" key="7">
    <source>
    </source>
</evidence>
<name>RUN3B_RAT</name>
<reference key="1">
    <citation type="journal article" date="2004" name="Genome Res.">
        <title>The status, quality, and expansion of the NIH full-length cDNA project: the Mammalian Gene Collection (MGC).</title>
        <authorList>
            <consortium name="The MGC Project Team"/>
        </authorList>
    </citation>
    <scope>NUCLEOTIDE SEQUENCE [LARGE SCALE MRNA]</scope>
    <source>
        <tissue>Prostate</tissue>
    </source>
</reference>
<reference key="2">
    <citation type="journal article" date="2012" name="Nat. Commun.">
        <title>Quantitative maps of protein phosphorylation sites across 14 different rat organs and tissues.</title>
        <authorList>
            <person name="Lundby A."/>
            <person name="Secher A."/>
            <person name="Lage K."/>
            <person name="Nordsborg N.B."/>
            <person name="Dmytriyev A."/>
            <person name="Lundby C."/>
            <person name="Olsen J.V."/>
        </authorList>
    </citation>
    <scope>PHOSPHORYLATION [LARGE SCALE ANALYSIS] AT SER-211 AND SER-212</scope>
    <scope>IDENTIFICATION BY MASS SPECTROMETRY [LARGE SCALE ANALYSIS]</scope>
</reference>
<accession>Q3B7K9</accession>
<sequence>MASRSLGGLSGSRGGGKKSLSARNAAVERRNLITVCRFSVKTLIDRSCFETIDDSSPEFNNFAAVLEQILSHRLKGQVTWFGYESPRSFWDYIRVACRKVSQNCICSIENMENVSSSRAKGRAWIRVALMEKHLSEYISTALRDFKTTRRFYEEGAIVLGEEANMLAGMLLGLNAIDFSFCLKGEGLDGTFPAVIDYTPYLKFEQSSDSISSDEEELRTFGSSDSEGSTPENVGPPLILDENSWFNKCKRVRQKYQLTLEQKGYLEELLRLRENQLSESVSQNKILLQRIEDSDLAHKLEKEQLEYIIVELQDQLKSYQSLDQLSAEVSLSQASLDPGHSQEGDGKQDSLNFIGEGKEDTPSLLGLCGSLTSVASYKSLTSLKSNDCLASPTTEITSPGLTPS</sequence>
<comment type="subunit">
    <text evidence="1">Interacts with RAP2A.</text>
</comment>
<comment type="similarity">
    <text evidence="6">Belongs to the RUNDC3 family.</text>
</comment>